<evidence type="ECO:0000255" key="1">
    <source>
        <dbReference type="HAMAP-Rule" id="MF_00484"/>
    </source>
</evidence>
<proteinExistence type="inferred from homology"/>
<accession>B2K6F8</accession>
<feature type="chain" id="PRO_1000126113" description="Glycogen synthase">
    <location>
        <begin position="1"/>
        <end position="476"/>
    </location>
</feature>
<feature type="binding site" evidence="1">
    <location>
        <position position="15"/>
    </location>
    <ligand>
        <name>ADP-alpha-D-glucose</name>
        <dbReference type="ChEBI" id="CHEBI:57498"/>
    </ligand>
</feature>
<reference key="1">
    <citation type="submission" date="2008-04" db="EMBL/GenBank/DDBJ databases">
        <title>Complete sequence of Yersinia pseudotuberculosis PB1/+.</title>
        <authorList>
            <person name="Copeland A."/>
            <person name="Lucas S."/>
            <person name="Lapidus A."/>
            <person name="Glavina del Rio T."/>
            <person name="Dalin E."/>
            <person name="Tice H."/>
            <person name="Bruce D."/>
            <person name="Goodwin L."/>
            <person name="Pitluck S."/>
            <person name="Munk A.C."/>
            <person name="Brettin T."/>
            <person name="Detter J.C."/>
            <person name="Han C."/>
            <person name="Tapia R."/>
            <person name="Schmutz J."/>
            <person name="Larimer F."/>
            <person name="Land M."/>
            <person name="Hauser L."/>
            <person name="Challacombe J.F."/>
            <person name="Green L."/>
            <person name="Lindler L.E."/>
            <person name="Nikolich M.P."/>
            <person name="Richardson P."/>
        </authorList>
    </citation>
    <scope>NUCLEOTIDE SEQUENCE [LARGE SCALE GENOMIC DNA]</scope>
    <source>
        <strain>PB1/+</strain>
    </source>
</reference>
<organism>
    <name type="scientific">Yersinia pseudotuberculosis serotype IB (strain PB1/+)</name>
    <dbReference type="NCBI Taxonomy" id="502801"/>
    <lineage>
        <taxon>Bacteria</taxon>
        <taxon>Pseudomonadati</taxon>
        <taxon>Pseudomonadota</taxon>
        <taxon>Gammaproteobacteria</taxon>
        <taxon>Enterobacterales</taxon>
        <taxon>Yersiniaceae</taxon>
        <taxon>Yersinia</taxon>
    </lineage>
</organism>
<protein>
    <recommendedName>
        <fullName evidence="1">Glycogen synthase</fullName>
        <ecNumber evidence="1">2.4.1.21</ecNumber>
    </recommendedName>
    <alternativeName>
        <fullName evidence="1">Starch [bacterial glycogen] synthase</fullName>
    </alternativeName>
</protein>
<gene>
    <name evidence="1" type="primary">glgA</name>
    <name type="ordered locus">YPTS_3981</name>
</gene>
<keyword id="KW-0320">Glycogen biosynthesis</keyword>
<keyword id="KW-0328">Glycosyltransferase</keyword>
<keyword id="KW-0808">Transferase</keyword>
<sequence>MRVLHVCSELFPLLKTGGLADVIGALPAAQLAEGADVRIILPAFPDLRRGIPETVLVREIDTFAGRVALRYGHYRGIGIYLIDAPALYDRAGSPYHDASLYAYSDNYLRFALLGWMACELACGLDGYWRPEVVHAHDWHAGLTCAYLAARGRPARSVFTVHNLAYQGLFSADHLSELHLPAEFFQIYGLEFYGQISYLKAGLFFADHVTTVSPTYAKEITQPAFGYGMEGLLQALVRQGRLTGILNGVDSDIWDPQSDTLLPTRYDAENLQAKAINKTHLQTAMGLQLAENKPIFAVVSRLTVQKGLDLVLEALPELLALGGQLVVLGSGDATLQEAFLAAAAEHSGQVGVQIGYHEAFSHRIIAGSDVILVPSRFEPCGLTQLYGLKYGTLPLVRHTGGLADTVVDCALENLADGSASGFVFNECEAQALVKAIRRAFVLWSRPKHWRHVQRHAMRLDFGWQLAAVDYLSLYRRL</sequence>
<comment type="function">
    <text evidence="1">Synthesizes alpha-1,4-glucan chains using ADP-glucose.</text>
</comment>
<comment type="catalytic activity">
    <reaction evidence="1">
        <text>[(1-&gt;4)-alpha-D-glucosyl](n) + ADP-alpha-D-glucose = [(1-&gt;4)-alpha-D-glucosyl](n+1) + ADP + H(+)</text>
        <dbReference type="Rhea" id="RHEA:18189"/>
        <dbReference type="Rhea" id="RHEA-COMP:9584"/>
        <dbReference type="Rhea" id="RHEA-COMP:9587"/>
        <dbReference type="ChEBI" id="CHEBI:15378"/>
        <dbReference type="ChEBI" id="CHEBI:15444"/>
        <dbReference type="ChEBI" id="CHEBI:57498"/>
        <dbReference type="ChEBI" id="CHEBI:456216"/>
        <dbReference type="EC" id="2.4.1.21"/>
    </reaction>
</comment>
<comment type="pathway">
    <text evidence="1">Glycan biosynthesis; glycogen biosynthesis.</text>
</comment>
<comment type="similarity">
    <text evidence="1">Belongs to the glycosyltransferase 1 family. Bacterial/plant glycogen synthase subfamily.</text>
</comment>
<name>GLGA_YERPB</name>
<dbReference type="EC" id="2.4.1.21" evidence="1"/>
<dbReference type="EMBL" id="CP001048">
    <property type="protein sequence ID" value="ACC90930.1"/>
    <property type="molecule type" value="Genomic_DNA"/>
</dbReference>
<dbReference type="RefSeq" id="WP_012414083.1">
    <property type="nucleotide sequence ID" value="NZ_CP009780.1"/>
</dbReference>
<dbReference type="SMR" id="B2K6F8"/>
<dbReference type="CAZy" id="GT5">
    <property type="family name" value="Glycosyltransferase Family 5"/>
</dbReference>
<dbReference type="GeneID" id="49784219"/>
<dbReference type="KEGG" id="ypb:YPTS_3981"/>
<dbReference type="PATRIC" id="fig|502801.10.peg.3448"/>
<dbReference type="UniPathway" id="UPA00164"/>
<dbReference type="GO" id="GO:0005829">
    <property type="term" value="C:cytosol"/>
    <property type="evidence" value="ECO:0007669"/>
    <property type="project" value="TreeGrafter"/>
</dbReference>
<dbReference type="GO" id="GO:0009011">
    <property type="term" value="F:alpha-1,4-glucan glucosyltransferase (ADP-glucose donor) activity"/>
    <property type="evidence" value="ECO:0007669"/>
    <property type="project" value="UniProtKB-UniRule"/>
</dbReference>
<dbReference type="GO" id="GO:0004373">
    <property type="term" value="F:alpha-1,4-glucan glucosyltransferase (UDP-glucose donor) activity"/>
    <property type="evidence" value="ECO:0007669"/>
    <property type="project" value="InterPro"/>
</dbReference>
<dbReference type="GO" id="GO:0005978">
    <property type="term" value="P:glycogen biosynthetic process"/>
    <property type="evidence" value="ECO:0007669"/>
    <property type="project" value="UniProtKB-UniRule"/>
</dbReference>
<dbReference type="CDD" id="cd03791">
    <property type="entry name" value="GT5_Glycogen_synthase_DULL1-like"/>
    <property type="match status" value="1"/>
</dbReference>
<dbReference type="FunFam" id="3.40.50.2000:FF:000011">
    <property type="entry name" value="Glycogen synthase"/>
    <property type="match status" value="1"/>
</dbReference>
<dbReference type="Gene3D" id="3.40.50.2000">
    <property type="entry name" value="Glycogen Phosphorylase B"/>
    <property type="match status" value="2"/>
</dbReference>
<dbReference type="HAMAP" id="MF_00484">
    <property type="entry name" value="Glycogen_synth"/>
    <property type="match status" value="1"/>
</dbReference>
<dbReference type="InterPro" id="IPR001296">
    <property type="entry name" value="Glyco_trans_1"/>
</dbReference>
<dbReference type="InterPro" id="IPR011835">
    <property type="entry name" value="GS/SS"/>
</dbReference>
<dbReference type="InterPro" id="IPR013534">
    <property type="entry name" value="Starch_synth_cat_dom"/>
</dbReference>
<dbReference type="NCBIfam" id="TIGR02095">
    <property type="entry name" value="glgA"/>
    <property type="match status" value="1"/>
</dbReference>
<dbReference type="NCBIfam" id="NF001899">
    <property type="entry name" value="PRK00654.1-2"/>
    <property type="match status" value="1"/>
</dbReference>
<dbReference type="PANTHER" id="PTHR45825:SF11">
    <property type="entry name" value="ALPHA AMYLASE DOMAIN-CONTAINING PROTEIN"/>
    <property type="match status" value="1"/>
</dbReference>
<dbReference type="PANTHER" id="PTHR45825">
    <property type="entry name" value="GRANULE-BOUND STARCH SYNTHASE 1, CHLOROPLASTIC/AMYLOPLASTIC"/>
    <property type="match status" value="1"/>
</dbReference>
<dbReference type="Pfam" id="PF08323">
    <property type="entry name" value="Glyco_transf_5"/>
    <property type="match status" value="1"/>
</dbReference>
<dbReference type="Pfam" id="PF00534">
    <property type="entry name" value="Glycos_transf_1"/>
    <property type="match status" value="1"/>
</dbReference>
<dbReference type="SUPFAM" id="SSF53756">
    <property type="entry name" value="UDP-Glycosyltransferase/glycogen phosphorylase"/>
    <property type="match status" value="1"/>
</dbReference>